<dbReference type="EMBL" id="L42023">
    <property type="protein sequence ID" value="AAC22711.1"/>
    <property type="molecule type" value="Genomic_DNA"/>
</dbReference>
<dbReference type="PIR" id="B64180">
    <property type="entry name" value="B64180"/>
</dbReference>
<dbReference type="RefSeq" id="NP_439211.1">
    <property type="nucleotide sequence ID" value="NC_000907.1"/>
</dbReference>
<dbReference type="SMR" id="P45008"/>
<dbReference type="STRING" id="71421.HI_1052"/>
<dbReference type="DNASU" id="950029"/>
<dbReference type="EnsemblBacteria" id="AAC22711">
    <property type="protein sequence ID" value="AAC22711"/>
    <property type="gene ID" value="HI_1052"/>
</dbReference>
<dbReference type="KEGG" id="hin:HI_1052"/>
<dbReference type="PATRIC" id="fig|71421.8.peg.1097"/>
<dbReference type="eggNOG" id="COG1917">
    <property type="taxonomic scope" value="Bacteria"/>
</dbReference>
<dbReference type="eggNOG" id="COG4977">
    <property type="taxonomic scope" value="Bacteria"/>
</dbReference>
<dbReference type="HOGENOM" id="CLU_000445_81_0_6"/>
<dbReference type="OrthoDB" id="9783876at2"/>
<dbReference type="PhylomeDB" id="P45008"/>
<dbReference type="BioCyc" id="HINF71421:G1GJ1-1091-MONOMER"/>
<dbReference type="Proteomes" id="UP000000579">
    <property type="component" value="Chromosome"/>
</dbReference>
<dbReference type="GO" id="GO:0003700">
    <property type="term" value="F:DNA-binding transcription factor activity"/>
    <property type="evidence" value="ECO:0007669"/>
    <property type="project" value="InterPro"/>
</dbReference>
<dbReference type="GO" id="GO:0043565">
    <property type="term" value="F:sequence-specific DNA binding"/>
    <property type="evidence" value="ECO:0007669"/>
    <property type="project" value="InterPro"/>
</dbReference>
<dbReference type="CDD" id="cd06995">
    <property type="entry name" value="cupin_YkgD-like_N"/>
    <property type="match status" value="1"/>
</dbReference>
<dbReference type="Gene3D" id="1.10.10.60">
    <property type="entry name" value="Homeodomain-like"/>
    <property type="match status" value="2"/>
</dbReference>
<dbReference type="Gene3D" id="2.60.120.10">
    <property type="entry name" value="Jelly Rolls"/>
    <property type="match status" value="1"/>
</dbReference>
<dbReference type="InterPro" id="IPR032783">
    <property type="entry name" value="AraC_lig"/>
</dbReference>
<dbReference type="InterPro" id="IPR009057">
    <property type="entry name" value="Homeodomain-like_sf"/>
</dbReference>
<dbReference type="InterPro" id="IPR037923">
    <property type="entry name" value="HTH-like"/>
</dbReference>
<dbReference type="InterPro" id="IPR018060">
    <property type="entry name" value="HTH_AraC"/>
</dbReference>
<dbReference type="InterPro" id="IPR018062">
    <property type="entry name" value="HTH_AraC-typ_CS"/>
</dbReference>
<dbReference type="InterPro" id="IPR014710">
    <property type="entry name" value="RmlC-like_jellyroll"/>
</dbReference>
<dbReference type="InterPro" id="IPR020449">
    <property type="entry name" value="Tscrpt_reg_AraC-type_HTH"/>
</dbReference>
<dbReference type="PANTHER" id="PTHR43280">
    <property type="entry name" value="ARAC-FAMILY TRANSCRIPTIONAL REGULATOR"/>
    <property type="match status" value="1"/>
</dbReference>
<dbReference type="PANTHER" id="PTHR43280:SF11">
    <property type="entry name" value="RCS-SPECIFIC HTH-TYPE TRANSCRIPTIONAL ACTIVATOR RCLR"/>
    <property type="match status" value="1"/>
</dbReference>
<dbReference type="Pfam" id="PF12852">
    <property type="entry name" value="Cupin_6"/>
    <property type="match status" value="1"/>
</dbReference>
<dbReference type="Pfam" id="PF12833">
    <property type="entry name" value="HTH_18"/>
    <property type="match status" value="1"/>
</dbReference>
<dbReference type="PRINTS" id="PR00032">
    <property type="entry name" value="HTHARAC"/>
</dbReference>
<dbReference type="SMART" id="SM00342">
    <property type="entry name" value="HTH_ARAC"/>
    <property type="match status" value="1"/>
</dbReference>
<dbReference type="SUPFAM" id="SSF46689">
    <property type="entry name" value="Homeodomain-like"/>
    <property type="match status" value="2"/>
</dbReference>
<dbReference type="SUPFAM" id="SSF51215">
    <property type="entry name" value="Regulatory protein AraC"/>
    <property type="match status" value="1"/>
</dbReference>
<dbReference type="PROSITE" id="PS00041">
    <property type="entry name" value="HTH_ARAC_FAMILY_1"/>
    <property type="match status" value="1"/>
</dbReference>
<dbReference type="PROSITE" id="PS01124">
    <property type="entry name" value="HTH_ARAC_FAMILY_2"/>
    <property type="match status" value="1"/>
</dbReference>
<gene>
    <name type="ordered locus">HI_1052</name>
</gene>
<reference key="1">
    <citation type="journal article" date="1995" name="Science">
        <title>Whole-genome random sequencing and assembly of Haemophilus influenzae Rd.</title>
        <authorList>
            <person name="Fleischmann R.D."/>
            <person name="Adams M.D."/>
            <person name="White O."/>
            <person name="Clayton R.A."/>
            <person name="Kirkness E.F."/>
            <person name="Kerlavage A.R."/>
            <person name="Bult C.J."/>
            <person name="Tomb J.-F."/>
            <person name="Dougherty B.A."/>
            <person name="Merrick J.M."/>
            <person name="McKenney K."/>
            <person name="Sutton G.G."/>
            <person name="FitzHugh W."/>
            <person name="Fields C.A."/>
            <person name="Gocayne J.D."/>
            <person name="Scott J.D."/>
            <person name="Shirley R."/>
            <person name="Liu L.-I."/>
            <person name="Glodek A."/>
            <person name="Kelley J.M."/>
            <person name="Weidman J.F."/>
            <person name="Phillips C.A."/>
            <person name="Spriggs T."/>
            <person name="Hedblom E."/>
            <person name="Cotton M.D."/>
            <person name="Utterback T.R."/>
            <person name="Hanna M.C."/>
            <person name="Nguyen D.T."/>
            <person name="Saudek D.M."/>
            <person name="Brandon R.C."/>
            <person name="Fine L.D."/>
            <person name="Fritchman J.L."/>
            <person name="Fuhrmann J.L."/>
            <person name="Geoghagen N.S.M."/>
            <person name="Gnehm C.L."/>
            <person name="McDonald L.A."/>
            <person name="Small K.V."/>
            <person name="Fraser C.M."/>
            <person name="Smith H.O."/>
            <person name="Venter J.C."/>
        </authorList>
    </citation>
    <scope>NUCLEOTIDE SEQUENCE [LARGE SCALE GENOMIC DNA]</scope>
    <source>
        <strain>ATCC 51907 / DSM 11121 / KW20 / Rd</strain>
    </source>
</reference>
<evidence type="ECO:0000255" key="1">
    <source>
        <dbReference type="PROSITE-ProRule" id="PRU00593"/>
    </source>
</evidence>
<organism>
    <name type="scientific">Haemophilus influenzae (strain ATCC 51907 / DSM 11121 / KW20 / Rd)</name>
    <dbReference type="NCBI Taxonomy" id="71421"/>
    <lineage>
        <taxon>Bacteria</taxon>
        <taxon>Pseudomonadati</taxon>
        <taxon>Pseudomonadota</taxon>
        <taxon>Gammaproteobacteria</taxon>
        <taxon>Pasteurellales</taxon>
        <taxon>Pasteurellaceae</taxon>
        <taxon>Haemophilus</taxon>
    </lineage>
</organism>
<protein>
    <recommendedName>
        <fullName>Uncharacterized HTH-type transcriptional regulator HI_1052</fullName>
    </recommendedName>
</protein>
<proteinExistence type="predicted"/>
<sequence length="298" mass="34291">MDYLDKLTHLAQVRGEINIRCEFQGEWQISHQEKDAGKGIFHLIEQGECWLTLNEKQFHLKEGDVFFLPQNQPHSMHYSANKRADIPTKKSHQGLFELHQIGRGTPDLKMFCGNFYYQQDALLTASMPEYLHINLCDTPIHPLVQLFLQEAQKNDAGTKSVVDALSNVLLIYILRHAIQQNLIEQGILFALQDKRLNTALIAILQQPQNDWHIEQLAELATMSRANFIRIFQQHIGMSPGRFLTKVRLQSAAFLLKQSQQSVLAIALEVGYQSEAHFCKVFKNYYQLSPSQYRKSVSL</sequence>
<name>Y1052_HAEIN</name>
<accession>P45008</accession>
<feature type="chain" id="PRO_0000194619" description="Uncharacterized HTH-type transcriptional regulator HI_1052">
    <location>
        <begin position="1"/>
        <end position="298"/>
    </location>
</feature>
<feature type="domain" description="HTH araC/xylS-type" evidence="1">
    <location>
        <begin position="194"/>
        <end position="295"/>
    </location>
</feature>
<feature type="DNA-binding region" description="H-T-H motif" evidence="1">
    <location>
        <begin position="214"/>
        <end position="235"/>
    </location>
</feature>
<feature type="DNA-binding region" description="H-T-H motif" evidence="1">
    <location>
        <begin position="262"/>
        <end position="285"/>
    </location>
</feature>
<keyword id="KW-0238">DNA-binding</keyword>
<keyword id="KW-1185">Reference proteome</keyword>
<keyword id="KW-0804">Transcription</keyword>
<keyword id="KW-0805">Transcription regulation</keyword>